<proteinExistence type="inferred from homology"/>
<feature type="chain" id="PRO_0000176458" description="Asparagine--tRNA ligase">
    <location>
        <begin position="1"/>
        <end position="448"/>
    </location>
</feature>
<keyword id="KW-0030">Aminoacyl-tRNA synthetase</keyword>
<keyword id="KW-0067">ATP-binding</keyword>
<keyword id="KW-0963">Cytoplasm</keyword>
<keyword id="KW-0436">Ligase</keyword>
<keyword id="KW-0547">Nucleotide-binding</keyword>
<keyword id="KW-0648">Protein biosynthesis</keyword>
<keyword id="KW-1185">Reference proteome</keyword>
<gene>
    <name evidence="1" type="primary">asnS</name>
    <name type="ordered locus">SAG0526</name>
</gene>
<evidence type="ECO:0000255" key="1">
    <source>
        <dbReference type="HAMAP-Rule" id="MF_00534"/>
    </source>
</evidence>
<reference key="1">
    <citation type="journal article" date="2002" name="Proc. Natl. Acad. Sci. U.S.A.">
        <title>Complete genome sequence and comparative genomic analysis of an emerging human pathogen, serotype V Streptococcus agalactiae.</title>
        <authorList>
            <person name="Tettelin H."/>
            <person name="Masignani V."/>
            <person name="Cieslewicz M.J."/>
            <person name="Eisen J.A."/>
            <person name="Peterson S.N."/>
            <person name="Wessels M.R."/>
            <person name="Paulsen I.T."/>
            <person name="Nelson K.E."/>
            <person name="Margarit I."/>
            <person name="Read T.D."/>
            <person name="Madoff L.C."/>
            <person name="Wolf A.M."/>
            <person name="Beanan M.J."/>
            <person name="Brinkac L.M."/>
            <person name="Daugherty S.C."/>
            <person name="DeBoy R.T."/>
            <person name="Durkin A.S."/>
            <person name="Kolonay J.F."/>
            <person name="Madupu R."/>
            <person name="Lewis M.R."/>
            <person name="Radune D."/>
            <person name="Fedorova N.B."/>
            <person name="Scanlan D."/>
            <person name="Khouri H.M."/>
            <person name="Mulligan S."/>
            <person name="Carty H.A."/>
            <person name="Cline R.T."/>
            <person name="Van Aken S.E."/>
            <person name="Gill J."/>
            <person name="Scarselli M."/>
            <person name="Mora M."/>
            <person name="Iacobini E.T."/>
            <person name="Brettoni C."/>
            <person name="Galli G."/>
            <person name="Mariani M."/>
            <person name="Vegni F."/>
            <person name="Maione D."/>
            <person name="Rinaudo D."/>
            <person name="Rappuoli R."/>
            <person name="Telford J.L."/>
            <person name="Kasper D.L."/>
            <person name="Grandi G."/>
            <person name="Fraser C.M."/>
        </authorList>
    </citation>
    <scope>NUCLEOTIDE SEQUENCE [LARGE SCALE GENOMIC DNA]</scope>
    <source>
        <strain>ATCC BAA-611 / 2603 V/R</strain>
    </source>
</reference>
<name>SYN_STRA5</name>
<comment type="catalytic activity">
    <reaction evidence="1">
        <text>tRNA(Asn) + L-asparagine + ATP = L-asparaginyl-tRNA(Asn) + AMP + diphosphate + H(+)</text>
        <dbReference type="Rhea" id="RHEA:11180"/>
        <dbReference type="Rhea" id="RHEA-COMP:9659"/>
        <dbReference type="Rhea" id="RHEA-COMP:9674"/>
        <dbReference type="ChEBI" id="CHEBI:15378"/>
        <dbReference type="ChEBI" id="CHEBI:30616"/>
        <dbReference type="ChEBI" id="CHEBI:33019"/>
        <dbReference type="ChEBI" id="CHEBI:58048"/>
        <dbReference type="ChEBI" id="CHEBI:78442"/>
        <dbReference type="ChEBI" id="CHEBI:78515"/>
        <dbReference type="ChEBI" id="CHEBI:456215"/>
        <dbReference type="EC" id="6.1.1.22"/>
    </reaction>
</comment>
<comment type="subunit">
    <text evidence="1">Homodimer.</text>
</comment>
<comment type="subcellular location">
    <subcellularLocation>
        <location evidence="1">Cytoplasm</location>
    </subcellularLocation>
</comment>
<comment type="similarity">
    <text evidence="1">Belongs to the class-II aminoacyl-tRNA synthetase family.</text>
</comment>
<dbReference type="EC" id="6.1.1.22" evidence="1"/>
<dbReference type="EMBL" id="AE009948">
    <property type="protein sequence ID" value="AAM99427.1"/>
    <property type="molecule type" value="Genomic_DNA"/>
</dbReference>
<dbReference type="RefSeq" id="NP_687555.1">
    <property type="nucleotide sequence ID" value="NC_004116.1"/>
</dbReference>
<dbReference type="RefSeq" id="WP_000038470.1">
    <property type="nucleotide sequence ID" value="NC_004116.1"/>
</dbReference>
<dbReference type="SMR" id="P67574"/>
<dbReference type="STRING" id="208435.SAG0526"/>
<dbReference type="KEGG" id="sag:SAG0526"/>
<dbReference type="PATRIC" id="fig|208435.3.peg.523"/>
<dbReference type="HOGENOM" id="CLU_004553_2_0_9"/>
<dbReference type="OrthoDB" id="9762036at2"/>
<dbReference type="Proteomes" id="UP000000821">
    <property type="component" value="Chromosome"/>
</dbReference>
<dbReference type="GO" id="GO:0005737">
    <property type="term" value="C:cytoplasm"/>
    <property type="evidence" value="ECO:0007669"/>
    <property type="project" value="UniProtKB-SubCell"/>
</dbReference>
<dbReference type="GO" id="GO:0004816">
    <property type="term" value="F:asparagine-tRNA ligase activity"/>
    <property type="evidence" value="ECO:0007669"/>
    <property type="project" value="UniProtKB-UniRule"/>
</dbReference>
<dbReference type="GO" id="GO:0005524">
    <property type="term" value="F:ATP binding"/>
    <property type="evidence" value="ECO:0007669"/>
    <property type="project" value="UniProtKB-UniRule"/>
</dbReference>
<dbReference type="GO" id="GO:0140096">
    <property type="term" value="F:catalytic activity, acting on a protein"/>
    <property type="evidence" value="ECO:0007669"/>
    <property type="project" value="UniProtKB-ARBA"/>
</dbReference>
<dbReference type="GO" id="GO:0003676">
    <property type="term" value="F:nucleic acid binding"/>
    <property type="evidence" value="ECO:0007669"/>
    <property type="project" value="InterPro"/>
</dbReference>
<dbReference type="GO" id="GO:0016740">
    <property type="term" value="F:transferase activity"/>
    <property type="evidence" value="ECO:0007669"/>
    <property type="project" value="UniProtKB-ARBA"/>
</dbReference>
<dbReference type="GO" id="GO:0006421">
    <property type="term" value="P:asparaginyl-tRNA aminoacylation"/>
    <property type="evidence" value="ECO:0007669"/>
    <property type="project" value="UniProtKB-UniRule"/>
</dbReference>
<dbReference type="CDD" id="cd04323">
    <property type="entry name" value="AsnRS_cyto_like_N"/>
    <property type="match status" value="1"/>
</dbReference>
<dbReference type="CDD" id="cd00776">
    <property type="entry name" value="AsxRS_core"/>
    <property type="match status" value="1"/>
</dbReference>
<dbReference type="Gene3D" id="3.30.930.10">
    <property type="entry name" value="Bira Bifunctional Protein, Domain 2"/>
    <property type="match status" value="1"/>
</dbReference>
<dbReference type="Gene3D" id="2.40.50.140">
    <property type="entry name" value="Nucleic acid-binding proteins"/>
    <property type="match status" value="1"/>
</dbReference>
<dbReference type="HAMAP" id="MF_00534">
    <property type="entry name" value="Asn_tRNA_synth"/>
    <property type="match status" value="1"/>
</dbReference>
<dbReference type="InterPro" id="IPR004364">
    <property type="entry name" value="Aa-tRNA-synt_II"/>
</dbReference>
<dbReference type="InterPro" id="IPR006195">
    <property type="entry name" value="aa-tRNA-synth_II"/>
</dbReference>
<dbReference type="InterPro" id="IPR045864">
    <property type="entry name" value="aa-tRNA-synth_II/BPL/LPL"/>
</dbReference>
<dbReference type="InterPro" id="IPR004522">
    <property type="entry name" value="Asn-tRNA-ligase"/>
</dbReference>
<dbReference type="InterPro" id="IPR002312">
    <property type="entry name" value="Asp/Asn-tRNA-synth_IIb"/>
</dbReference>
<dbReference type="InterPro" id="IPR012340">
    <property type="entry name" value="NA-bd_OB-fold"/>
</dbReference>
<dbReference type="InterPro" id="IPR004365">
    <property type="entry name" value="NA-bd_OB_tRNA"/>
</dbReference>
<dbReference type="NCBIfam" id="TIGR00457">
    <property type="entry name" value="asnS"/>
    <property type="match status" value="1"/>
</dbReference>
<dbReference type="NCBIfam" id="NF003037">
    <property type="entry name" value="PRK03932.1"/>
    <property type="match status" value="1"/>
</dbReference>
<dbReference type="PANTHER" id="PTHR22594:SF34">
    <property type="entry name" value="ASPARAGINE--TRNA LIGASE, MITOCHONDRIAL-RELATED"/>
    <property type="match status" value="1"/>
</dbReference>
<dbReference type="PANTHER" id="PTHR22594">
    <property type="entry name" value="ASPARTYL/LYSYL-TRNA SYNTHETASE"/>
    <property type="match status" value="1"/>
</dbReference>
<dbReference type="Pfam" id="PF00152">
    <property type="entry name" value="tRNA-synt_2"/>
    <property type="match status" value="1"/>
</dbReference>
<dbReference type="Pfam" id="PF01336">
    <property type="entry name" value="tRNA_anti-codon"/>
    <property type="match status" value="1"/>
</dbReference>
<dbReference type="PRINTS" id="PR01042">
    <property type="entry name" value="TRNASYNTHASP"/>
</dbReference>
<dbReference type="SUPFAM" id="SSF55681">
    <property type="entry name" value="Class II aaRS and biotin synthetases"/>
    <property type="match status" value="1"/>
</dbReference>
<dbReference type="SUPFAM" id="SSF50249">
    <property type="entry name" value="Nucleic acid-binding proteins"/>
    <property type="match status" value="1"/>
</dbReference>
<dbReference type="PROSITE" id="PS50862">
    <property type="entry name" value="AA_TRNA_LIGASE_II"/>
    <property type="match status" value="1"/>
</dbReference>
<accession>P67574</accession>
<accession>Q8E137</accession>
<accession>Q8E6J1</accession>
<sequence>MSKKLISIVDVKDYVGQEVTIGAWVANKSGKGKIAFVQLRDGSAFFQGVAFKPNFIEKYGEESGLEKFDVIKRLNQETSVYVTGIVKEDERSKFGYELDITDLEVIGESHEYPITPKEHGTDFLMDNRHLWLRSRKQMAVMQIRNAIIYSTYEFFDQNGFIKFDSPILSENAAEDSTELFETDYFGKPAFLSQSGQLYLEAGAMALGRVFDFGPVFRAEKSKTRRHLTEFWMMDAEYSFLSHEESLDLQEAYVKALIQGVLDRAPQALDILERDVEALKRYIAEPFKRVSYDDAITLLQEHEADEDTDYEHLEHGDDFGSPHETWISNYFGVPTFVVNYPASFKAFYMKPVPGNPERVLCADLLAPEGYGEIIGGSMREDDYDALVAKMDELGMDKSEYDFYLDLRKYGSVPHGGFGIGIERMVTFVAGTKHIREAIPFPRMLHRIKP</sequence>
<organism>
    <name type="scientific">Streptococcus agalactiae serotype V (strain ATCC BAA-611 / 2603 V/R)</name>
    <dbReference type="NCBI Taxonomy" id="208435"/>
    <lineage>
        <taxon>Bacteria</taxon>
        <taxon>Bacillati</taxon>
        <taxon>Bacillota</taxon>
        <taxon>Bacilli</taxon>
        <taxon>Lactobacillales</taxon>
        <taxon>Streptococcaceae</taxon>
        <taxon>Streptococcus</taxon>
    </lineage>
</organism>
<protein>
    <recommendedName>
        <fullName evidence="1">Asparagine--tRNA ligase</fullName>
        <ecNumber evidence="1">6.1.1.22</ecNumber>
    </recommendedName>
    <alternativeName>
        <fullName evidence="1">Asparaginyl-tRNA synthetase</fullName>
        <shortName evidence="1">AsnRS</shortName>
    </alternativeName>
</protein>